<keyword id="KW-1003">Cell membrane</keyword>
<keyword id="KW-0472">Membrane</keyword>
<keyword id="KW-0812">Transmembrane</keyword>
<keyword id="KW-1133">Transmembrane helix</keyword>
<protein>
    <recommendedName>
        <fullName>CASP-like protein 5A1</fullName>
        <shortName>PcCASPL5A1</shortName>
    </recommendedName>
</protein>
<organism>
    <name type="scientific">Pinus contorta</name>
    <name type="common">Shore pine</name>
    <name type="synonym">Lodgepole pine</name>
    <dbReference type="NCBI Taxonomy" id="3339"/>
    <lineage>
        <taxon>Eukaryota</taxon>
        <taxon>Viridiplantae</taxon>
        <taxon>Streptophyta</taxon>
        <taxon>Embryophyta</taxon>
        <taxon>Tracheophyta</taxon>
        <taxon>Spermatophyta</taxon>
        <taxon>Pinopsida</taxon>
        <taxon>Pinidae</taxon>
        <taxon>Conifers I</taxon>
        <taxon>Pinales</taxon>
        <taxon>Pinaceae</taxon>
        <taxon>Pinus</taxon>
        <taxon>Pinus subgen. Pinus</taxon>
    </lineage>
</organism>
<sequence length="185" mass="19853">MNVSHPAVHPVGVPPALGGQAVPPRMRMRVRMEYLVFQGMPLPGSLGGLMLRLGQFCSALIAFSVMVSIRDFSVTAFCYLLAATVLQCLWSLALAVIDVYALLVKRSLRNPLLVSIFVVGDGVTATLTFAAACASAGVVVLIGNDISMCKSNPCANYEAAIIMAFLSWFMVSISFVLTFWMLATL</sequence>
<accession>P0DI64</accession>
<proteinExistence type="evidence at transcript level"/>
<comment type="subunit">
    <text evidence="1">Homodimer and heterodimers.</text>
</comment>
<comment type="subcellular location">
    <subcellularLocation>
        <location evidence="1">Cell membrane</location>
        <topology evidence="1">Multi-pass membrane protein</topology>
    </subcellularLocation>
</comment>
<comment type="similarity">
    <text evidence="3">Belongs to the Casparian strip membrane proteins (CASP) family.</text>
</comment>
<reference key="1">
    <citation type="submission" date="2009-10" db="EMBL/GenBank/DDBJ databases">
        <title>Expressed sequence tags from the lodgepole pine, Pinus contorta.</title>
        <authorList>
            <person name="Keeling C.I."/>
            <person name="Henderson H."/>
            <person name="Li M."/>
            <person name="Liao N."/>
            <person name="Docking R."/>
            <person name="Chan S."/>
            <person name="Taylor G."/>
            <person name="Moore R."/>
            <person name="Munro S."/>
            <person name="Mayo M."/>
            <person name="Jefferson K."/>
            <person name="Lee H.W."/>
            <person name="Leung A."/>
            <person name="Thorne K."/>
            <person name="Trinh E."/>
            <person name="Matsuo C."/>
            <person name="Chand S."/>
            <person name="Brown-John M."/>
            <person name="McMurtrie H."/>
            <person name="Cruz K."/>
            <person name="Smith J."/>
            <person name="Holt R."/>
            <person name="Jones S."/>
            <person name="Marra M."/>
            <person name="Cooke J.E.K."/>
            <person name="Bohlmann J."/>
        </authorList>
    </citation>
    <scope>NUCLEOTIDE SEQUENCE [LARGE SCALE MRNA]</scope>
    <source>
        <tissue>Xylem</tissue>
    </source>
</reference>
<reference key="2">
    <citation type="journal article" date="2014" name="Plant Physiol.">
        <title>Functional and evolutionary analysis of the CASPARIAN STRIP MEMBRANE DOMAIN PROTEIN family.</title>
        <authorList>
            <person name="Roppolo D."/>
            <person name="Boeckmann B."/>
            <person name="Pfister A."/>
            <person name="Boutet E."/>
            <person name="Rubio M.C."/>
            <person name="Denervaud-Tendon V."/>
            <person name="Vermeer J.E."/>
            <person name="Gheyselinck J."/>
            <person name="Xenarios I."/>
            <person name="Geldner N."/>
        </authorList>
    </citation>
    <scope>GENE FAMILY</scope>
    <scope>NOMENCLATURE</scope>
</reference>
<name>CSPL1_PINCO</name>
<feature type="chain" id="PRO_0000418683" description="CASP-like protein 5A1">
    <location>
        <begin position="1"/>
        <end position="185"/>
    </location>
</feature>
<feature type="topological domain" description="Cytoplasmic" evidence="2">
    <location>
        <begin position="1"/>
        <end position="48"/>
    </location>
</feature>
<feature type="transmembrane region" description="Helical" evidence="2">
    <location>
        <begin position="49"/>
        <end position="69"/>
    </location>
</feature>
<feature type="topological domain" description="Extracellular" evidence="2">
    <location>
        <begin position="70"/>
        <end position="76"/>
    </location>
</feature>
<feature type="transmembrane region" description="Helical" evidence="2">
    <location>
        <begin position="77"/>
        <end position="97"/>
    </location>
</feature>
<feature type="topological domain" description="Cytoplasmic" evidence="2">
    <location>
        <begin position="98"/>
        <end position="121"/>
    </location>
</feature>
<feature type="transmembrane region" description="Helical" evidence="2">
    <location>
        <begin position="122"/>
        <end position="142"/>
    </location>
</feature>
<feature type="topological domain" description="Extracellular" evidence="2">
    <location>
        <begin position="143"/>
        <end position="160"/>
    </location>
</feature>
<feature type="transmembrane region" description="Helical" evidence="2">
    <location>
        <begin position="161"/>
        <end position="181"/>
    </location>
</feature>
<feature type="topological domain" description="Cytoplasmic" evidence="2">
    <location>
        <begin position="182"/>
        <end position="185"/>
    </location>
</feature>
<evidence type="ECO:0000250" key="1"/>
<evidence type="ECO:0000255" key="2"/>
<evidence type="ECO:0000305" key="3"/>
<dbReference type="EMBL" id="GT265686">
    <property type="status" value="NOT_ANNOTATED_CDS"/>
    <property type="molecule type" value="mRNA"/>
</dbReference>
<dbReference type="GO" id="GO:0005886">
    <property type="term" value="C:plasma membrane"/>
    <property type="evidence" value="ECO:0007669"/>
    <property type="project" value="UniProtKB-SubCell"/>
</dbReference>
<dbReference type="InterPro" id="IPR006702">
    <property type="entry name" value="CASP_dom"/>
</dbReference>
<dbReference type="InterPro" id="IPR045009">
    <property type="entry name" value="CASPL-5"/>
</dbReference>
<dbReference type="PANTHER" id="PTHR32021:SF1">
    <property type="entry name" value="CASP-LIKE PROTEIN 5A1"/>
    <property type="match status" value="1"/>
</dbReference>
<dbReference type="PANTHER" id="PTHR32021">
    <property type="entry name" value="CASP-LIKE PROTEIN 5B3"/>
    <property type="match status" value="1"/>
</dbReference>
<dbReference type="Pfam" id="PF04535">
    <property type="entry name" value="CASP_dom"/>
    <property type="match status" value="1"/>
</dbReference>